<reference key="1">
    <citation type="submission" date="2005-03" db="EMBL/GenBank/DDBJ databases">
        <title>Brevibacillus brevis strain 47, complete genome.</title>
        <authorList>
            <person name="Hosoyama A."/>
            <person name="Yamada R."/>
            <person name="Hongo Y."/>
            <person name="Terui Y."/>
            <person name="Ankai A."/>
            <person name="Masuyama W."/>
            <person name="Sekiguchi M."/>
            <person name="Takeda T."/>
            <person name="Asano K."/>
            <person name="Ohji S."/>
            <person name="Ichikawa N."/>
            <person name="Narita S."/>
            <person name="Aoki N."/>
            <person name="Miura H."/>
            <person name="Matsushita S."/>
            <person name="Sekigawa T."/>
            <person name="Yamagata H."/>
            <person name="Yoshikawa H."/>
            <person name="Udaka S."/>
            <person name="Tanikawa S."/>
            <person name="Fujita N."/>
        </authorList>
    </citation>
    <scope>NUCLEOTIDE SEQUENCE [LARGE SCALE GENOMIC DNA]</scope>
    <source>
        <strain>47 / JCM 6285 / NBRC 100599</strain>
    </source>
</reference>
<gene>
    <name evidence="1" type="primary">dnaK</name>
    <name type="ordered locus">BBR47_20300</name>
</gene>
<accession>C0ZB48</accession>
<feature type="chain" id="PRO_1000133134" description="Chaperone protein DnaK">
    <location>
        <begin position="1"/>
        <end position="609"/>
    </location>
</feature>
<feature type="region of interest" description="Disordered" evidence="2">
    <location>
        <begin position="580"/>
        <end position="609"/>
    </location>
</feature>
<feature type="compositionally biased region" description="Acidic residues" evidence="2">
    <location>
        <begin position="598"/>
        <end position="609"/>
    </location>
</feature>
<feature type="modified residue" description="Phosphothreonine; by autocatalysis" evidence="1">
    <location>
        <position position="173"/>
    </location>
</feature>
<proteinExistence type="inferred from homology"/>
<comment type="function">
    <text evidence="1">Acts as a chaperone.</text>
</comment>
<comment type="induction">
    <text evidence="1">By stress conditions e.g. heat shock.</text>
</comment>
<comment type="similarity">
    <text evidence="1">Belongs to the heat shock protein 70 family.</text>
</comment>
<protein>
    <recommendedName>
        <fullName evidence="1">Chaperone protein DnaK</fullName>
    </recommendedName>
    <alternativeName>
        <fullName evidence="1">HSP70</fullName>
    </alternativeName>
    <alternativeName>
        <fullName evidence="1">Heat shock 70 kDa protein</fullName>
    </alternativeName>
    <alternativeName>
        <fullName evidence="1">Heat shock protein 70</fullName>
    </alternativeName>
</protein>
<name>DNAK_BREBN</name>
<organism>
    <name type="scientific">Brevibacillus brevis (strain 47 / JCM 6285 / NBRC 100599)</name>
    <dbReference type="NCBI Taxonomy" id="358681"/>
    <lineage>
        <taxon>Bacteria</taxon>
        <taxon>Bacillati</taxon>
        <taxon>Bacillota</taxon>
        <taxon>Bacilli</taxon>
        <taxon>Bacillales</taxon>
        <taxon>Paenibacillaceae</taxon>
        <taxon>Brevibacillus</taxon>
    </lineage>
</organism>
<dbReference type="EMBL" id="AP008955">
    <property type="protein sequence ID" value="BAH43007.1"/>
    <property type="molecule type" value="Genomic_DNA"/>
</dbReference>
<dbReference type="RefSeq" id="WP_012685740.1">
    <property type="nucleotide sequence ID" value="NC_012491.1"/>
</dbReference>
<dbReference type="SMR" id="C0ZB48"/>
<dbReference type="STRING" id="358681.BBR47_20300"/>
<dbReference type="KEGG" id="bbe:BBR47_20300"/>
<dbReference type="eggNOG" id="COG0443">
    <property type="taxonomic scope" value="Bacteria"/>
</dbReference>
<dbReference type="HOGENOM" id="CLU_005965_2_4_9"/>
<dbReference type="Proteomes" id="UP000001877">
    <property type="component" value="Chromosome"/>
</dbReference>
<dbReference type="GO" id="GO:0005524">
    <property type="term" value="F:ATP binding"/>
    <property type="evidence" value="ECO:0007669"/>
    <property type="project" value="UniProtKB-UniRule"/>
</dbReference>
<dbReference type="GO" id="GO:0140662">
    <property type="term" value="F:ATP-dependent protein folding chaperone"/>
    <property type="evidence" value="ECO:0007669"/>
    <property type="project" value="InterPro"/>
</dbReference>
<dbReference type="GO" id="GO:0051082">
    <property type="term" value="F:unfolded protein binding"/>
    <property type="evidence" value="ECO:0007669"/>
    <property type="project" value="InterPro"/>
</dbReference>
<dbReference type="CDD" id="cd10234">
    <property type="entry name" value="ASKHA_NBD_HSP70_DnaK-like"/>
    <property type="match status" value="1"/>
</dbReference>
<dbReference type="FunFam" id="2.60.34.10:FF:000014">
    <property type="entry name" value="Chaperone protein DnaK HSP70"/>
    <property type="match status" value="1"/>
</dbReference>
<dbReference type="FunFam" id="1.20.1270.10:FF:000001">
    <property type="entry name" value="Molecular chaperone DnaK"/>
    <property type="match status" value="1"/>
</dbReference>
<dbReference type="FunFam" id="3.30.420.40:FF:000071">
    <property type="entry name" value="Molecular chaperone DnaK"/>
    <property type="match status" value="1"/>
</dbReference>
<dbReference type="FunFam" id="3.90.640.10:FF:000003">
    <property type="entry name" value="Molecular chaperone DnaK"/>
    <property type="match status" value="1"/>
</dbReference>
<dbReference type="Gene3D" id="1.20.1270.10">
    <property type="match status" value="1"/>
</dbReference>
<dbReference type="Gene3D" id="3.30.30.30">
    <property type="match status" value="1"/>
</dbReference>
<dbReference type="Gene3D" id="3.30.420.40">
    <property type="match status" value="3"/>
</dbReference>
<dbReference type="Gene3D" id="3.90.640.10">
    <property type="entry name" value="Actin, Chain A, domain 4"/>
    <property type="match status" value="1"/>
</dbReference>
<dbReference type="Gene3D" id="2.60.34.10">
    <property type="entry name" value="Substrate Binding Domain Of DNAk, Chain A, domain 1"/>
    <property type="match status" value="1"/>
</dbReference>
<dbReference type="HAMAP" id="MF_00332">
    <property type="entry name" value="DnaK"/>
    <property type="match status" value="1"/>
</dbReference>
<dbReference type="InterPro" id="IPR043129">
    <property type="entry name" value="ATPase_NBD"/>
</dbReference>
<dbReference type="InterPro" id="IPR012725">
    <property type="entry name" value="Chaperone_DnaK"/>
</dbReference>
<dbReference type="InterPro" id="IPR018181">
    <property type="entry name" value="Heat_shock_70_CS"/>
</dbReference>
<dbReference type="InterPro" id="IPR029048">
    <property type="entry name" value="HSP70_C_sf"/>
</dbReference>
<dbReference type="InterPro" id="IPR029047">
    <property type="entry name" value="HSP70_peptide-bd_sf"/>
</dbReference>
<dbReference type="InterPro" id="IPR013126">
    <property type="entry name" value="Hsp_70_fam"/>
</dbReference>
<dbReference type="NCBIfam" id="NF001413">
    <property type="entry name" value="PRK00290.1"/>
    <property type="match status" value="1"/>
</dbReference>
<dbReference type="NCBIfam" id="TIGR02350">
    <property type="entry name" value="prok_dnaK"/>
    <property type="match status" value="1"/>
</dbReference>
<dbReference type="PANTHER" id="PTHR19375">
    <property type="entry name" value="HEAT SHOCK PROTEIN 70KDA"/>
    <property type="match status" value="1"/>
</dbReference>
<dbReference type="Pfam" id="PF00012">
    <property type="entry name" value="HSP70"/>
    <property type="match status" value="1"/>
</dbReference>
<dbReference type="PRINTS" id="PR00301">
    <property type="entry name" value="HEATSHOCK70"/>
</dbReference>
<dbReference type="SUPFAM" id="SSF53067">
    <property type="entry name" value="Actin-like ATPase domain"/>
    <property type="match status" value="2"/>
</dbReference>
<dbReference type="SUPFAM" id="SSF100934">
    <property type="entry name" value="Heat shock protein 70kD (HSP70), C-terminal subdomain"/>
    <property type="match status" value="1"/>
</dbReference>
<dbReference type="SUPFAM" id="SSF100920">
    <property type="entry name" value="Heat shock protein 70kD (HSP70), peptide-binding domain"/>
    <property type="match status" value="1"/>
</dbReference>
<dbReference type="PROSITE" id="PS00297">
    <property type="entry name" value="HSP70_1"/>
    <property type="match status" value="1"/>
</dbReference>
<dbReference type="PROSITE" id="PS00329">
    <property type="entry name" value="HSP70_2"/>
    <property type="match status" value="1"/>
</dbReference>
<dbReference type="PROSITE" id="PS01036">
    <property type="entry name" value="HSP70_3"/>
    <property type="match status" value="1"/>
</dbReference>
<keyword id="KW-0067">ATP-binding</keyword>
<keyword id="KW-0143">Chaperone</keyword>
<keyword id="KW-0547">Nucleotide-binding</keyword>
<keyword id="KW-0597">Phosphoprotein</keyword>
<keyword id="KW-1185">Reference proteome</keyword>
<keyword id="KW-0346">Stress response</keyword>
<evidence type="ECO:0000255" key="1">
    <source>
        <dbReference type="HAMAP-Rule" id="MF_00332"/>
    </source>
</evidence>
<evidence type="ECO:0000256" key="2">
    <source>
        <dbReference type="SAM" id="MobiDB-lite"/>
    </source>
</evidence>
<sequence>MSRVIGIDLGTTNSCVAVMEGGEPVVIANAEGNRTTPSVVAFKNGERIVGEAAKRQAITNPDNTVISIKRHMGSAHKETLEGNQYTPEQISAMILQKLKADAEAYLGQSVTQAVITVPAYFNDSQRQATKDAGKIAGLEVLRIVNEPTAAALAYGMEKTEDQTVLVFDLGGGTFDVSILELSDGFFEVKATSGDNKLGGDDFDDVVMNYLVSEFKKEHGIDLSKDRMAQQRLKDAAEKAKKDLSGVLTTTISLPFITADATGPKHLEMNLTRAKFEELSAELVERTMGPTRQALKDAGLTPSELDRVILVGGSTRIPAVQEAIKKFTGKEPHKGVNPDEVVALGAAVQAGVLTGDVKDVVLLDVTPLSLGIETLGGVFTKLIDRNTTIPTSKSQVFSTAADNQTSVEIHVLQGERQMAGDNKSLGRFNLSDIPPAPRGIPQIEVSFDIDANGIVNVRAKDLGTGKEQRITITSNSGLSDDDIDRMVKDAELNAEADKQRKEQVEVRNEADQLVFTTEKTLKEVEGKIDQAEIDRANAAKDKVKAALEGSNFEEIKTAKDELSEIIQQISVKLYEQAAQAQAAQGGGAEGQEPKKDNVVDADYEVVDDKK</sequence>